<sequence>MARLAAFDMDGTLLMPDHHLGEKTLSTLARLRERDITLTFATGRHALEMQHILGALSLDAYLITGNGTRVHSLEGELLHRDDLPADVAELVLYQQWDTRASMHIFNDDGWFTGKEIPALLQAFVYSGFRYQIIDVKKMPLGSVTKICFCGDHDDLTRLQIQLYEALGERAHLCFSATDCLEVLPVGCNKGAALTVLTQHLGLSLRDCMAFGDAMNDREMLGSVGSGFIMGNAMPQLRAELPHLPVIGHCRNQAVSHYLTHWLDYPHLPYSPE</sequence>
<keyword id="KW-0378">Hydrolase</keyword>
<keyword id="KW-0460">Magnesium</keyword>
<keyword id="KW-0479">Metal-binding</keyword>
<keyword id="KW-1185">Reference proteome</keyword>
<feature type="chain" id="PRO_1000188496" description="HMP-PP phosphatase">
    <location>
        <begin position="1"/>
        <end position="272"/>
    </location>
</feature>
<feature type="active site" description="Nucleophile" evidence="1">
    <location>
        <position position="8"/>
    </location>
</feature>
<feature type="binding site" evidence="1">
    <location>
        <position position="8"/>
    </location>
    <ligand>
        <name>Mg(2+)</name>
        <dbReference type="ChEBI" id="CHEBI:18420"/>
    </ligand>
</feature>
<feature type="binding site" evidence="1">
    <location>
        <position position="10"/>
    </location>
    <ligand>
        <name>Mg(2+)</name>
        <dbReference type="ChEBI" id="CHEBI:18420"/>
    </ligand>
</feature>
<feature type="binding site" evidence="1">
    <location>
        <position position="212"/>
    </location>
    <ligand>
        <name>Mg(2+)</name>
        <dbReference type="ChEBI" id="CHEBI:18420"/>
    </ligand>
</feature>
<protein>
    <recommendedName>
        <fullName evidence="1">HMP-PP phosphatase</fullName>
        <ecNumber evidence="1">3.6.1.-</ecNumber>
    </recommendedName>
</protein>
<accession>B7MDA5</accession>
<name>COF_ECO45</name>
<gene>
    <name evidence="1" type="primary">cof</name>
    <name type="ordered locus">ECS88_0443</name>
</gene>
<evidence type="ECO:0000255" key="1">
    <source>
        <dbReference type="HAMAP-Rule" id="MF_01847"/>
    </source>
</evidence>
<dbReference type="EC" id="3.6.1.-" evidence="1"/>
<dbReference type="EMBL" id="CU928161">
    <property type="protein sequence ID" value="CAR01790.1"/>
    <property type="molecule type" value="Genomic_DNA"/>
</dbReference>
<dbReference type="RefSeq" id="WP_000113027.1">
    <property type="nucleotide sequence ID" value="NC_011742.1"/>
</dbReference>
<dbReference type="SMR" id="B7MDA5"/>
<dbReference type="GeneID" id="93777004"/>
<dbReference type="KEGG" id="ecz:ECS88_0443"/>
<dbReference type="HOGENOM" id="CLU_044146_5_2_6"/>
<dbReference type="Proteomes" id="UP000000747">
    <property type="component" value="Chromosome"/>
</dbReference>
<dbReference type="GO" id="GO:0002145">
    <property type="term" value="F:4-amino-5-hydroxymethyl-2-methylpyrimidine diphosphatase activity"/>
    <property type="evidence" value="ECO:0007669"/>
    <property type="project" value="RHEA"/>
</dbReference>
<dbReference type="GO" id="GO:0000287">
    <property type="term" value="F:magnesium ion binding"/>
    <property type="evidence" value="ECO:0000250"/>
    <property type="project" value="UniProtKB"/>
</dbReference>
<dbReference type="GO" id="GO:0016791">
    <property type="term" value="F:phosphatase activity"/>
    <property type="evidence" value="ECO:0000250"/>
    <property type="project" value="UniProtKB"/>
</dbReference>
<dbReference type="CDD" id="cd07516">
    <property type="entry name" value="HAD_Pase"/>
    <property type="match status" value="1"/>
</dbReference>
<dbReference type="FunFam" id="3.30.1240.10:FF:000002">
    <property type="entry name" value="HMP-PP phosphatase"/>
    <property type="match status" value="1"/>
</dbReference>
<dbReference type="Gene3D" id="3.30.1240.10">
    <property type="match status" value="1"/>
</dbReference>
<dbReference type="Gene3D" id="3.40.50.1000">
    <property type="entry name" value="HAD superfamily/HAD-like"/>
    <property type="match status" value="1"/>
</dbReference>
<dbReference type="HAMAP" id="MF_01847">
    <property type="entry name" value="HMP_PP_phosphat"/>
    <property type="match status" value="1"/>
</dbReference>
<dbReference type="InterPro" id="IPR000150">
    <property type="entry name" value="Cof"/>
</dbReference>
<dbReference type="InterPro" id="IPR036412">
    <property type="entry name" value="HAD-like_sf"/>
</dbReference>
<dbReference type="InterPro" id="IPR006379">
    <property type="entry name" value="HAD-SF_hydro_IIB"/>
</dbReference>
<dbReference type="InterPro" id="IPR023214">
    <property type="entry name" value="HAD_sf"/>
</dbReference>
<dbReference type="InterPro" id="IPR023938">
    <property type="entry name" value="HMP-PP_phosphatase"/>
</dbReference>
<dbReference type="NCBIfam" id="TIGR00099">
    <property type="entry name" value="Cof-subfamily"/>
    <property type="match status" value="1"/>
</dbReference>
<dbReference type="NCBIfam" id="TIGR01484">
    <property type="entry name" value="HAD-SF-IIB"/>
    <property type="match status" value="1"/>
</dbReference>
<dbReference type="NCBIfam" id="NF011705">
    <property type="entry name" value="PRK15126.1"/>
    <property type="match status" value="1"/>
</dbReference>
<dbReference type="PANTHER" id="PTHR47267">
    <property type="match status" value="1"/>
</dbReference>
<dbReference type="PANTHER" id="PTHR47267:SF2">
    <property type="entry name" value="HMP-PP PHOSPHATASE"/>
    <property type="match status" value="1"/>
</dbReference>
<dbReference type="Pfam" id="PF08282">
    <property type="entry name" value="Hydrolase_3"/>
    <property type="match status" value="1"/>
</dbReference>
<dbReference type="SFLD" id="SFLDG01140">
    <property type="entry name" value="C2.B:_Phosphomannomutase_and_P"/>
    <property type="match status" value="1"/>
</dbReference>
<dbReference type="SFLD" id="SFLDS00003">
    <property type="entry name" value="Haloacid_Dehalogenase"/>
    <property type="match status" value="1"/>
</dbReference>
<dbReference type="SUPFAM" id="SSF56784">
    <property type="entry name" value="HAD-like"/>
    <property type="match status" value="1"/>
</dbReference>
<dbReference type="PROSITE" id="PS01228">
    <property type="entry name" value="COF_1"/>
    <property type="match status" value="1"/>
</dbReference>
<dbReference type="PROSITE" id="PS01229">
    <property type="entry name" value="COF_2"/>
    <property type="match status" value="1"/>
</dbReference>
<comment type="function">
    <text evidence="1">Catalyzes the hydrolysis of 4-amino-2-methyl-5-hydroxymethylpyrimidine pyrophosphate (HMP-PP) to 4-amino-2-methyl-5-hydroxymethylpyrimidine phosphate (HMP-P).</text>
</comment>
<comment type="catalytic activity">
    <reaction evidence="1">
        <text>4-amino-2-methyl-5-(diphosphooxymethyl)pyrimidine + H2O = 4-amino-2-methyl-5-(phosphooxymethyl)pyrimidine + phosphate + H(+)</text>
        <dbReference type="Rhea" id="RHEA:27914"/>
        <dbReference type="ChEBI" id="CHEBI:15377"/>
        <dbReference type="ChEBI" id="CHEBI:15378"/>
        <dbReference type="ChEBI" id="CHEBI:43474"/>
        <dbReference type="ChEBI" id="CHEBI:57841"/>
        <dbReference type="ChEBI" id="CHEBI:58354"/>
    </reaction>
</comment>
<comment type="cofactor">
    <cofactor evidence="1">
        <name>Mg(2+)</name>
        <dbReference type="ChEBI" id="CHEBI:18420"/>
    </cofactor>
</comment>
<comment type="similarity">
    <text evidence="1">Belongs to the HAD-like hydrolase superfamily. Cof family.</text>
</comment>
<proteinExistence type="inferred from homology"/>
<reference key="1">
    <citation type="journal article" date="2009" name="PLoS Genet.">
        <title>Organised genome dynamics in the Escherichia coli species results in highly diverse adaptive paths.</title>
        <authorList>
            <person name="Touchon M."/>
            <person name="Hoede C."/>
            <person name="Tenaillon O."/>
            <person name="Barbe V."/>
            <person name="Baeriswyl S."/>
            <person name="Bidet P."/>
            <person name="Bingen E."/>
            <person name="Bonacorsi S."/>
            <person name="Bouchier C."/>
            <person name="Bouvet O."/>
            <person name="Calteau A."/>
            <person name="Chiapello H."/>
            <person name="Clermont O."/>
            <person name="Cruveiller S."/>
            <person name="Danchin A."/>
            <person name="Diard M."/>
            <person name="Dossat C."/>
            <person name="Karoui M.E."/>
            <person name="Frapy E."/>
            <person name="Garry L."/>
            <person name="Ghigo J.M."/>
            <person name="Gilles A.M."/>
            <person name="Johnson J."/>
            <person name="Le Bouguenec C."/>
            <person name="Lescat M."/>
            <person name="Mangenot S."/>
            <person name="Martinez-Jehanne V."/>
            <person name="Matic I."/>
            <person name="Nassif X."/>
            <person name="Oztas S."/>
            <person name="Petit M.A."/>
            <person name="Pichon C."/>
            <person name="Rouy Z."/>
            <person name="Ruf C.S."/>
            <person name="Schneider D."/>
            <person name="Tourret J."/>
            <person name="Vacherie B."/>
            <person name="Vallenet D."/>
            <person name="Medigue C."/>
            <person name="Rocha E.P.C."/>
            <person name="Denamur E."/>
        </authorList>
    </citation>
    <scope>NUCLEOTIDE SEQUENCE [LARGE SCALE GENOMIC DNA]</scope>
    <source>
        <strain>S88 / ExPEC</strain>
    </source>
</reference>
<organism>
    <name type="scientific">Escherichia coli O45:K1 (strain S88 / ExPEC)</name>
    <dbReference type="NCBI Taxonomy" id="585035"/>
    <lineage>
        <taxon>Bacteria</taxon>
        <taxon>Pseudomonadati</taxon>
        <taxon>Pseudomonadota</taxon>
        <taxon>Gammaproteobacteria</taxon>
        <taxon>Enterobacterales</taxon>
        <taxon>Enterobacteriaceae</taxon>
        <taxon>Escherichia</taxon>
    </lineage>
</organism>